<protein>
    <recommendedName>
        <fullName>Ras-related protein Rab-23</fullName>
        <ecNumber evidence="3">3.6.5.2</ecNumber>
    </recommendedName>
    <alternativeName>
        <fullName>Protein open brain</fullName>
    </alternativeName>
    <alternativeName>
        <fullName>Rab-15</fullName>
    </alternativeName>
</protein>
<proteinExistence type="evidence at protein level"/>
<evidence type="ECO:0000250" key="1"/>
<evidence type="ECO:0000250" key="2">
    <source>
        <dbReference type="UniProtKB" id="P20340"/>
    </source>
</evidence>
<evidence type="ECO:0000250" key="3">
    <source>
        <dbReference type="UniProtKB" id="Q9ULC3"/>
    </source>
</evidence>
<evidence type="ECO:0000255" key="4"/>
<evidence type="ECO:0000256" key="5">
    <source>
        <dbReference type="SAM" id="MobiDB-lite"/>
    </source>
</evidence>
<evidence type="ECO:0000269" key="6">
    <source>
    </source>
</evidence>
<evidence type="ECO:0000269" key="7">
    <source>
    </source>
</evidence>
<evidence type="ECO:0000269" key="8">
    <source>
    </source>
</evidence>
<evidence type="ECO:0000269" key="9">
    <source>
    </source>
</evidence>
<evidence type="ECO:0000269" key="10">
    <source>
    </source>
</evidence>
<evidence type="ECO:0000269" key="11">
    <source>
    </source>
</evidence>
<evidence type="ECO:0000269" key="12">
    <source>
    </source>
</evidence>
<evidence type="ECO:0000269" key="13">
    <source>
    </source>
</evidence>
<evidence type="ECO:0000305" key="14"/>
<evidence type="ECO:0000312" key="15">
    <source>
        <dbReference type="MGI" id="MGI:99833"/>
    </source>
</evidence>
<evidence type="ECO:0007744" key="16">
    <source>
        <dbReference type="PDB" id="1Z22"/>
    </source>
</evidence>
<evidence type="ECO:0007744" key="17">
    <source>
        <dbReference type="PDB" id="1Z2A"/>
    </source>
</evidence>
<evidence type="ECO:0007829" key="18">
    <source>
        <dbReference type="PDB" id="1Z2A"/>
    </source>
</evidence>
<comment type="function">
    <text evidence="1 6 7 10 12 13">The small GTPases Rab are key regulators of intracellular membrane trafficking, from the formation of transport vesicles to their fusion with membranes. Rabs cycle between an inactive GDP-bound form and an active GTP-bound form that is able to recruit to membranes different set of downstream effectors directly responsible for vesicle formation, movement, tethering and fusion (By similarity). Plays a role in autophagic vacuole assembly, and mediates defense against pathogens, such as S.aureus, by promoting their capture by autophagosomes that then merge with lysosomes (By similarity). Together with SUFU, prevents nuclear import of GLI1, and thereby inhibits GLI1 transcription factor activity. Regulates GLI1 in differentiating chondrocytes. Likewise, regulates GLI3 proteolytic processing and modulates GLI2 and GLI3 transcription factor activity.</text>
</comment>
<comment type="catalytic activity">
    <reaction evidence="3">
        <text>GTP + H2O = GDP + phosphate + H(+)</text>
        <dbReference type="Rhea" id="RHEA:19669"/>
        <dbReference type="ChEBI" id="CHEBI:15377"/>
        <dbReference type="ChEBI" id="CHEBI:15378"/>
        <dbReference type="ChEBI" id="CHEBI:37565"/>
        <dbReference type="ChEBI" id="CHEBI:43474"/>
        <dbReference type="ChEBI" id="CHEBI:58189"/>
        <dbReference type="EC" id="3.6.5.2"/>
    </reaction>
    <physiologicalReaction direction="left-to-right" evidence="3">
        <dbReference type="Rhea" id="RHEA:19670"/>
    </physiologicalReaction>
</comment>
<comment type="cofactor">
    <cofactor evidence="9">
        <name>Mg(2+)</name>
        <dbReference type="ChEBI" id="CHEBI:18420"/>
    </cofactor>
</comment>
<comment type="activity regulation">
    <text evidence="14">Regulated by guanine nucleotide exchange factors (GEFs) which promote the exchange of bound GDP for free GTP (Probable). Regulated by GTPase activating proteins (GAPs) which increase the GTP hydrolysis activity (Probable). Inhibited by GDP dissociation inhibitors (GDIs) (Probable).</text>
</comment>
<comment type="subunit">
    <text evidence="1">Interacts with SUFU.</text>
</comment>
<comment type="subcellular location">
    <subcellularLocation>
        <location evidence="8">Cell membrane</location>
        <topology evidence="14">Lipid-anchor</topology>
        <orientation evidence="8">Cytoplasmic side</orientation>
    </subcellularLocation>
    <subcellularLocation>
        <location evidence="8">Cytoplasm</location>
    </subcellularLocation>
    <subcellularLocation>
        <location evidence="8">Endosome membrane</location>
    </subcellularLocation>
    <subcellularLocation>
        <location evidence="3">Cytoplasmic vesicle</location>
        <location evidence="3">Autophagosome</location>
    </subcellularLocation>
    <subcellularLocation>
        <location evidence="14">Cytoplasmic vesicle</location>
        <location evidence="14">Phagosome</location>
    </subcellularLocation>
    <subcellularLocation>
        <location evidence="14">Cytoplasmic vesicle</location>
        <location evidence="14">Phagosome membrane</location>
        <topology evidence="14">Lipid-anchor</topology>
        <orientation evidence="14">Cytoplasmic side</orientation>
    </subcellularLocation>
    <text evidence="3">Recruited to phagosomes containing S.aureus or Mycobacterium.</text>
</comment>
<comment type="tissue specificity">
    <text evidence="8 11">Detected in brain neurons (at protein level). Forebrain and midbrain.</text>
</comment>
<comment type="domain">
    <text evidence="2">Switch 1, switch 2 and the interswitch regions are characteristic of Rab GTPases and mediate the interactions with Rab downstream effectors. The switch regions undergo conformational changes upon nucleotide binding which drives interaction with specific sets of effector proteins, with most effectors only binding to GTP-bound Rab.</text>
</comment>
<comment type="disease">
    <text>Defects in Rab23 are the cause of the open brain phenotype. Mice suffer from exencephaly and severe malformations of the spinal cord and the dorsal root ganglia, leading to complete embryonic lethality. In addition, mice display poorly developed eyes and polydactyly.</text>
</comment>
<comment type="disruption phenotype">
    <text evidence="6 7">Complete embryonic lethality, due to defects in neural tube closure. Mice suffer from exencephaly and severe malformations of the spinal cord and the dorsal root ganglia. In addition, mice display poorly developed eyes and polydactyly.</text>
</comment>
<comment type="similarity">
    <text evidence="14">Belongs to the small GTPase superfamily. Rab family.</text>
</comment>
<organism>
    <name type="scientific">Mus musculus</name>
    <name type="common">Mouse</name>
    <dbReference type="NCBI Taxonomy" id="10090"/>
    <lineage>
        <taxon>Eukaryota</taxon>
        <taxon>Metazoa</taxon>
        <taxon>Chordata</taxon>
        <taxon>Craniata</taxon>
        <taxon>Vertebrata</taxon>
        <taxon>Euteleostomi</taxon>
        <taxon>Mammalia</taxon>
        <taxon>Eutheria</taxon>
        <taxon>Euarchontoglires</taxon>
        <taxon>Glires</taxon>
        <taxon>Rodentia</taxon>
        <taxon>Myomorpha</taxon>
        <taxon>Muroidea</taxon>
        <taxon>Muridae</taxon>
        <taxon>Murinae</taxon>
        <taxon>Mus</taxon>
        <taxon>Mus</taxon>
    </lineage>
</organism>
<feature type="chain" id="PRO_0000121212" description="Ras-related protein Rab-23">
    <location>
        <begin position="1"/>
        <end position="234"/>
    </location>
</feature>
<feature type="propeptide" id="PRO_0000370772" description="Removed in mature form" evidence="4">
    <location>
        <begin position="235"/>
        <end position="237"/>
    </location>
</feature>
<feature type="region of interest" description="Disordered" evidence="5">
    <location>
        <begin position="204"/>
        <end position="237"/>
    </location>
</feature>
<feature type="short sequence motif" description="Switch 1" evidence="2">
    <location>
        <begin position="28"/>
        <end position="46"/>
    </location>
</feature>
<feature type="short sequence motif" description="Switch 2" evidence="2">
    <location>
        <begin position="65"/>
        <end position="84"/>
    </location>
</feature>
<feature type="binding site" evidence="9 16 17">
    <location>
        <position position="19"/>
    </location>
    <ligand>
        <name>GDP</name>
        <dbReference type="ChEBI" id="CHEBI:58189"/>
    </ligand>
</feature>
<feature type="binding site" evidence="2">
    <location>
        <position position="20"/>
    </location>
    <ligand>
        <name>GTP</name>
        <dbReference type="ChEBI" id="CHEBI:37565"/>
    </ligand>
</feature>
<feature type="binding site" evidence="9 16 17">
    <location>
        <position position="21"/>
    </location>
    <ligand>
        <name>GDP</name>
        <dbReference type="ChEBI" id="CHEBI:58189"/>
    </ligand>
</feature>
<feature type="binding site" evidence="2">
    <location>
        <position position="21"/>
    </location>
    <ligand>
        <name>GTP</name>
        <dbReference type="ChEBI" id="CHEBI:37565"/>
    </ligand>
</feature>
<feature type="binding site" evidence="9 16 17">
    <location>
        <position position="22"/>
    </location>
    <ligand>
        <name>GDP</name>
        <dbReference type="ChEBI" id="CHEBI:58189"/>
    </ligand>
</feature>
<feature type="binding site" evidence="2">
    <location>
        <position position="22"/>
    </location>
    <ligand>
        <name>GTP</name>
        <dbReference type="ChEBI" id="CHEBI:37565"/>
    </ligand>
</feature>
<feature type="binding site" evidence="9 16 17">
    <location>
        <position position="23"/>
    </location>
    <ligand>
        <name>GDP</name>
        <dbReference type="ChEBI" id="CHEBI:58189"/>
    </ligand>
</feature>
<feature type="binding site" evidence="2">
    <location>
        <position position="23"/>
    </location>
    <ligand>
        <name>GTP</name>
        <dbReference type="ChEBI" id="CHEBI:37565"/>
    </ligand>
</feature>
<feature type="binding site" evidence="9 17">
    <location>
        <position position="23"/>
    </location>
    <ligand>
        <name>Mg(2+)</name>
        <dbReference type="ChEBI" id="CHEBI:18420"/>
    </ligand>
</feature>
<feature type="binding site" evidence="9 16 17">
    <location>
        <position position="24"/>
    </location>
    <ligand>
        <name>GDP</name>
        <dbReference type="ChEBI" id="CHEBI:58189"/>
    </ligand>
</feature>
<feature type="binding site" evidence="2">
    <location>
        <position position="24"/>
    </location>
    <ligand>
        <name>GTP</name>
        <dbReference type="ChEBI" id="CHEBI:37565"/>
    </ligand>
</feature>
<feature type="binding site" evidence="9 17">
    <location>
        <position position="37"/>
    </location>
    <ligand>
        <name>GDP</name>
        <dbReference type="ChEBI" id="CHEBI:58189"/>
    </ligand>
</feature>
<feature type="binding site" evidence="2">
    <location>
        <position position="38"/>
    </location>
    <ligand>
        <name>GTP</name>
        <dbReference type="ChEBI" id="CHEBI:37565"/>
    </ligand>
</feature>
<feature type="binding site" evidence="9 17">
    <location>
        <position position="40"/>
    </location>
    <ligand>
        <name>GDP</name>
        <dbReference type="ChEBI" id="CHEBI:58189"/>
    </ligand>
</feature>
<feature type="binding site" evidence="2">
    <location>
        <position position="41"/>
    </location>
    <ligand>
        <name>GTP</name>
        <dbReference type="ChEBI" id="CHEBI:37565"/>
    </ligand>
</feature>
<feature type="binding site" evidence="2">
    <location>
        <position position="41"/>
    </location>
    <ligand>
        <name>Mg(2+)</name>
        <dbReference type="ChEBI" id="CHEBI:18420"/>
    </ligand>
</feature>
<feature type="binding site" evidence="9 16">
    <location>
        <position position="64"/>
    </location>
    <ligand>
        <name>Mg(2+)</name>
        <dbReference type="ChEBI" id="CHEBI:18420"/>
    </ligand>
</feature>
<feature type="binding site" evidence="2">
    <location>
        <position position="67"/>
    </location>
    <ligand>
        <name>GTP</name>
        <dbReference type="ChEBI" id="CHEBI:37565"/>
    </ligand>
</feature>
<feature type="binding site" evidence="9 16 17">
    <location>
        <position position="121"/>
    </location>
    <ligand>
        <name>GDP</name>
        <dbReference type="ChEBI" id="CHEBI:58189"/>
    </ligand>
</feature>
<feature type="binding site" evidence="2">
    <location>
        <position position="121"/>
    </location>
    <ligand>
        <name>GTP</name>
        <dbReference type="ChEBI" id="CHEBI:37565"/>
    </ligand>
</feature>
<feature type="binding site" evidence="9 16 17">
    <location>
        <position position="122"/>
    </location>
    <ligand>
        <name>GDP</name>
        <dbReference type="ChEBI" id="CHEBI:58189"/>
    </ligand>
</feature>
<feature type="binding site" evidence="2">
    <location>
        <position position="122"/>
    </location>
    <ligand>
        <name>GTP</name>
        <dbReference type="ChEBI" id="CHEBI:37565"/>
    </ligand>
</feature>
<feature type="binding site" evidence="9 16 17">
    <location>
        <position position="124"/>
    </location>
    <ligand>
        <name>GDP</name>
        <dbReference type="ChEBI" id="CHEBI:58189"/>
    </ligand>
</feature>
<feature type="binding site" evidence="2">
    <location>
        <position position="124"/>
    </location>
    <ligand>
        <name>GTP</name>
        <dbReference type="ChEBI" id="CHEBI:37565"/>
    </ligand>
</feature>
<feature type="binding site" evidence="2">
    <location>
        <position position="151"/>
    </location>
    <ligand>
        <name>GTP</name>
        <dbReference type="ChEBI" id="CHEBI:37565"/>
    </ligand>
</feature>
<feature type="binding site" evidence="9 16 17">
    <location>
        <position position="152"/>
    </location>
    <ligand>
        <name>GDP</name>
        <dbReference type="ChEBI" id="CHEBI:58189"/>
    </ligand>
</feature>
<feature type="binding site" evidence="2">
    <location>
        <position position="152"/>
    </location>
    <ligand>
        <name>GTP</name>
        <dbReference type="ChEBI" id="CHEBI:37565"/>
    </ligand>
</feature>
<feature type="binding site" evidence="9 16 17">
    <location>
        <position position="153"/>
    </location>
    <ligand>
        <name>GDP</name>
        <dbReference type="ChEBI" id="CHEBI:58189"/>
    </ligand>
</feature>
<feature type="binding site" evidence="2">
    <location>
        <position position="153"/>
    </location>
    <ligand>
        <name>GTP</name>
        <dbReference type="ChEBI" id="CHEBI:37565"/>
    </ligand>
</feature>
<feature type="modified residue" description="Phosphoserine" evidence="3">
    <location>
        <position position="186"/>
    </location>
</feature>
<feature type="modified residue" description="Phosphoserine" evidence="3">
    <location>
        <position position="187"/>
    </location>
</feature>
<feature type="modified residue" description="Cysteine methyl ester" evidence="4">
    <location>
        <position position="234"/>
    </location>
</feature>
<feature type="lipid moiety-binding region" description="S-geranylgeranyl cysteine" evidence="1">
    <location>
        <position position="234"/>
    </location>
</feature>
<feature type="strand" evidence="18">
    <location>
        <begin position="9"/>
        <end position="15"/>
    </location>
</feature>
<feature type="helix" evidence="18">
    <location>
        <begin position="22"/>
        <end position="31"/>
    </location>
</feature>
<feature type="strand" evidence="18">
    <location>
        <begin position="43"/>
        <end position="53"/>
    </location>
</feature>
<feature type="strand" evidence="18">
    <location>
        <begin position="56"/>
        <end position="63"/>
    </location>
</feature>
<feature type="helix" evidence="18">
    <location>
        <begin position="68"/>
        <end position="70"/>
    </location>
</feature>
<feature type="helix" evidence="18">
    <location>
        <begin position="76"/>
        <end position="79"/>
    </location>
</feature>
<feature type="strand" evidence="18">
    <location>
        <begin position="84"/>
        <end position="90"/>
    </location>
</feature>
<feature type="helix" evidence="18">
    <location>
        <begin position="94"/>
        <end position="98"/>
    </location>
</feature>
<feature type="helix" evidence="18">
    <location>
        <begin position="100"/>
        <end position="111"/>
    </location>
</feature>
<feature type="strand" evidence="18">
    <location>
        <begin position="116"/>
        <end position="121"/>
    </location>
</feature>
<feature type="helix" evidence="18">
    <location>
        <begin position="123"/>
        <end position="128"/>
    </location>
</feature>
<feature type="helix" evidence="18">
    <location>
        <begin position="133"/>
        <end position="143"/>
    </location>
</feature>
<feature type="strand" evidence="18">
    <location>
        <begin position="146"/>
        <end position="149"/>
    </location>
</feature>
<feature type="turn" evidence="18">
    <location>
        <begin position="152"/>
        <end position="155"/>
    </location>
</feature>
<feature type="strand" evidence="18">
    <location>
        <begin position="156"/>
        <end position="158"/>
    </location>
</feature>
<feature type="helix" evidence="18">
    <location>
        <begin position="159"/>
        <end position="170"/>
    </location>
</feature>
<name>RAB23_MOUSE</name>
<sequence length="237" mass="26678">MLEEDMEVAIKMVVVGNGAVGKSSMIQRYCKGIFTKDYKKTIGVDFLERQIQVNDEDVRLMLWDTAGQEEFDAITKAYYRGAQACVLVFSTTDRESFEAISSWREKVVAEVGDIPTALVQNKIDLLDDSCIKNEEAEGLAKRLKLRFYRTSVKEDLNVSEVFKYLAEKHLQKLKQQITEDPEQTHSSSNKIGVFNASVGSHLGQNSSSLNGGDVINLRPNKQRTKRTRNPFSSCSVP</sequence>
<dbReference type="EC" id="3.6.5.2" evidence="3"/>
<dbReference type="EMBL" id="Z22821">
    <property type="protein sequence ID" value="CAA80474.1"/>
    <property type="molecule type" value="mRNA"/>
</dbReference>
<dbReference type="EMBL" id="BC025578">
    <property type="protein sequence ID" value="AAH25578.1"/>
    <property type="molecule type" value="mRNA"/>
</dbReference>
<dbReference type="EMBL" id="M79305">
    <property type="protein sequence ID" value="AAK14829.1"/>
    <property type="molecule type" value="mRNA"/>
</dbReference>
<dbReference type="CCDS" id="CCDS35532.1"/>
<dbReference type="PIR" id="I48729">
    <property type="entry name" value="S40244"/>
</dbReference>
<dbReference type="PIR" id="JH0645">
    <property type="entry name" value="JH0645"/>
</dbReference>
<dbReference type="PDB" id="1Z22">
    <property type="method" value="X-ray"/>
    <property type="resolution" value="2.06 A"/>
    <property type="chains" value="A=7-172"/>
</dbReference>
<dbReference type="PDB" id="1Z2A">
    <property type="method" value="X-ray"/>
    <property type="resolution" value="1.90 A"/>
    <property type="chains" value="A=7-172"/>
</dbReference>
<dbReference type="PDBsum" id="1Z22"/>
<dbReference type="PDBsum" id="1Z2A"/>
<dbReference type="SMR" id="P35288"/>
<dbReference type="DIP" id="DIP-60517N"/>
<dbReference type="FunCoup" id="P35288">
    <property type="interactions" value="1609"/>
</dbReference>
<dbReference type="IntAct" id="P35288">
    <property type="interactions" value="1"/>
</dbReference>
<dbReference type="STRING" id="10090.ENSMUSP00000085625"/>
<dbReference type="GlyGen" id="P35288">
    <property type="glycosylation" value="2 sites, 2 N-linked glycans (2 sites)"/>
</dbReference>
<dbReference type="iPTMnet" id="P35288"/>
<dbReference type="PhosphoSitePlus" id="P35288"/>
<dbReference type="jPOST" id="P35288"/>
<dbReference type="PaxDb" id="10090-ENSMUSP00000085625"/>
<dbReference type="PeptideAtlas" id="P35288"/>
<dbReference type="ProteomicsDB" id="253143"/>
<dbReference type="Pumba" id="P35288"/>
<dbReference type="UCSC" id="uc007anv.1">
    <property type="organism name" value="mouse"/>
</dbReference>
<dbReference type="AGR" id="MGI:99833"/>
<dbReference type="MGI" id="MGI:99833">
    <property type="gene designation" value="Rab23"/>
</dbReference>
<dbReference type="eggNOG" id="KOG4252">
    <property type="taxonomic scope" value="Eukaryota"/>
</dbReference>
<dbReference type="InParanoid" id="P35288"/>
<dbReference type="PhylomeDB" id="P35288"/>
<dbReference type="Reactome" id="R-MMU-8873719">
    <property type="pathway name" value="RAB geranylgeranylation"/>
</dbReference>
<dbReference type="ChiTaRS" id="Rab23">
    <property type="organism name" value="mouse"/>
</dbReference>
<dbReference type="EvolutionaryTrace" id="P35288"/>
<dbReference type="PRO" id="PR:P35288"/>
<dbReference type="Proteomes" id="UP000000589">
    <property type="component" value="Unplaced"/>
</dbReference>
<dbReference type="RNAct" id="P35288">
    <property type="molecule type" value="protein"/>
</dbReference>
<dbReference type="GO" id="GO:0005776">
    <property type="term" value="C:autophagosome"/>
    <property type="evidence" value="ECO:0000250"/>
    <property type="project" value="UniProtKB"/>
</dbReference>
<dbReference type="GO" id="GO:0005737">
    <property type="term" value="C:cytoplasm"/>
    <property type="evidence" value="ECO:0000250"/>
    <property type="project" value="UniProtKB"/>
</dbReference>
<dbReference type="GO" id="GO:0010008">
    <property type="term" value="C:endosome membrane"/>
    <property type="evidence" value="ECO:0000314"/>
    <property type="project" value="UniProtKB"/>
</dbReference>
<dbReference type="GO" id="GO:0045335">
    <property type="term" value="C:phagocytic vesicle"/>
    <property type="evidence" value="ECO:0000250"/>
    <property type="project" value="UniProtKB"/>
</dbReference>
<dbReference type="GO" id="GO:0030670">
    <property type="term" value="C:phagocytic vesicle membrane"/>
    <property type="evidence" value="ECO:0007669"/>
    <property type="project" value="UniProtKB-SubCell"/>
</dbReference>
<dbReference type="GO" id="GO:0005886">
    <property type="term" value="C:plasma membrane"/>
    <property type="evidence" value="ECO:0000314"/>
    <property type="project" value="UniProtKB"/>
</dbReference>
<dbReference type="GO" id="GO:0005525">
    <property type="term" value="F:GTP binding"/>
    <property type="evidence" value="ECO:0007669"/>
    <property type="project" value="UniProtKB-KW"/>
</dbReference>
<dbReference type="GO" id="GO:0003924">
    <property type="term" value="F:GTPase activity"/>
    <property type="evidence" value="ECO:0000250"/>
    <property type="project" value="UniProtKB"/>
</dbReference>
<dbReference type="GO" id="GO:0000045">
    <property type="term" value="P:autophagosome assembly"/>
    <property type="evidence" value="ECO:0000250"/>
    <property type="project" value="UniProtKB"/>
</dbReference>
<dbReference type="GO" id="GO:0006968">
    <property type="term" value="P:cellular defense response"/>
    <property type="evidence" value="ECO:0000250"/>
    <property type="project" value="UniProtKB"/>
</dbReference>
<dbReference type="GO" id="GO:0097094">
    <property type="term" value="P:craniofacial suture morphogenesis"/>
    <property type="evidence" value="ECO:0000250"/>
    <property type="project" value="UniProtKB"/>
</dbReference>
<dbReference type="GO" id="GO:0021904">
    <property type="term" value="P:dorsal/ventral neural tube patterning"/>
    <property type="evidence" value="ECO:0000315"/>
    <property type="project" value="UniProtKB"/>
</dbReference>
<dbReference type="GO" id="GO:0042733">
    <property type="term" value="P:embryonic digit morphogenesis"/>
    <property type="evidence" value="ECO:0000315"/>
    <property type="project" value="MGI"/>
</dbReference>
<dbReference type="GO" id="GO:0046039">
    <property type="term" value="P:GTP metabolic process"/>
    <property type="evidence" value="ECO:0000250"/>
    <property type="project" value="UniProtKB"/>
</dbReference>
<dbReference type="GO" id="GO:0042308">
    <property type="term" value="P:negative regulation of protein import into nucleus"/>
    <property type="evidence" value="ECO:0000250"/>
    <property type="project" value="UniProtKB"/>
</dbReference>
<dbReference type="GO" id="GO:0045861">
    <property type="term" value="P:negative regulation of proteolysis"/>
    <property type="evidence" value="ECO:0000315"/>
    <property type="project" value="MGI"/>
</dbReference>
<dbReference type="GO" id="GO:0007399">
    <property type="term" value="P:nervous system development"/>
    <property type="evidence" value="ECO:0000315"/>
    <property type="project" value="MGI"/>
</dbReference>
<dbReference type="GO" id="GO:0001843">
    <property type="term" value="P:neural tube closure"/>
    <property type="evidence" value="ECO:0000315"/>
    <property type="project" value="UniProtKB"/>
</dbReference>
<dbReference type="GO" id="GO:0015031">
    <property type="term" value="P:protein transport"/>
    <property type="evidence" value="ECO:0007669"/>
    <property type="project" value="UniProtKB-KW"/>
</dbReference>
<dbReference type="GO" id="GO:0006508">
    <property type="term" value="P:proteolysis"/>
    <property type="evidence" value="ECO:0000315"/>
    <property type="project" value="MGI"/>
</dbReference>
<dbReference type="GO" id="GO:0008589">
    <property type="term" value="P:regulation of smoothened signaling pathway"/>
    <property type="evidence" value="ECO:0000316"/>
    <property type="project" value="MGI"/>
</dbReference>
<dbReference type="GO" id="GO:0007165">
    <property type="term" value="P:signal transduction"/>
    <property type="evidence" value="ECO:0000315"/>
    <property type="project" value="MGI"/>
</dbReference>
<dbReference type="GO" id="GO:0021513">
    <property type="term" value="P:spinal cord dorsal/ventral patterning"/>
    <property type="evidence" value="ECO:0000315"/>
    <property type="project" value="MGI"/>
</dbReference>
<dbReference type="CDD" id="cd04106">
    <property type="entry name" value="Rab23_like"/>
    <property type="match status" value="1"/>
</dbReference>
<dbReference type="FunFam" id="3.40.50.300:FF:000669">
    <property type="entry name" value="Ras-related protein Rab-23"/>
    <property type="match status" value="1"/>
</dbReference>
<dbReference type="Gene3D" id="3.40.50.300">
    <property type="entry name" value="P-loop containing nucleotide triphosphate hydrolases"/>
    <property type="match status" value="1"/>
</dbReference>
<dbReference type="InterPro" id="IPR027417">
    <property type="entry name" value="P-loop_NTPase"/>
</dbReference>
<dbReference type="InterPro" id="IPR050227">
    <property type="entry name" value="Rab"/>
</dbReference>
<dbReference type="InterPro" id="IPR034114">
    <property type="entry name" value="Rab23"/>
</dbReference>
<dbReference type="InterPro" id="IPR005225">
    <property type="entry name" value="Small_GTP-bd"/>
</dbReference>
<dbReference type="InterPro" id="IPR001806">
    <property type="entry name" value="Small_GTPase"/>
</dbReference>
<dbReference type="NCBIfam" id="TIGR00231">
    <property type="entry name" value="small_GTP"/>
    <property type="match status" value="1"/>
</dbReference>
<dbReference type="PANTHER" id="PTHR47977">
    <property type="entry name" value="RAS-RELATED PROTEIN RAB"/>
    <property type="match status" value="1"/>
</dbReference>
<dbReference type="Pfam" id="PF00071">
    <property type="entry name" value="Ras"/>
    <property type="match status" value="1"/>
</dbReference>
<dbReference type="PRINTS" id="PR00449">
    <property type="entry name" value="RASTRNSFRMNG"/>
</dbReference>
<dbReference type="SMART" id="SM00175">
    <property type="entry name" value="RAB"/>
    <property type="match status" value="1"/>
</dbReference>
<dbReference type="SMART" id="SM00176">
    <property type="entry name" value="RAN"/>
    <property type="match status" value="1"/>
</dbReference>
<dbReference type="SMART" id="SM00173">
    <property type="entry name" value="RAS"/>
    <property type="match status" value="1"/>
</dbReference>
<dbReference type="SMART" id="SM00174">
    <property type="entry name" value="RHO"/>
    <property type="match status" value="1"/>
</dbReference>
<dbReference type="SUPFAM" id="SSF52540">
    <property type="entry name" value="P-loop containing nucleoside triphosphate hydrolases"/>
    <property type="match status" value="1"/>
</dbReference>
<dbReference type="PROSITE" id="PS51419">
    <property type="entry name" value="RAB"/>
    <property type="match status" value="1"/>
</dbReference>
<gene>
    <name evidence="15" type="primary">Rab23</name>
    <name type="synonym">Opb</name>
</gene>
<reference key="1">
    <citation type="journal article" date="1994" name="Gene">
        <title>Isolation of a mouse cDNA encoding Rab23, a small novel GTPase expressed predominantly in the brain.</title>
        <authorList>
            <person name="Olkkonen V.M."/>
            <person name="Peterson J.R."/>
            <person name="Dupree P."/>
            <person name="Lutcke A."/>
            <person name="Zerial M."/>
            <person name="Simons K."/>
        </authorList>
    </citation>
    <scope>NUCLEOTIDE SEQUENCE [MRNA]</scope>
    <source>
        <tissue>Kidney</tissue>
    </source>
</reference>
<reference key="2">
    <citation type="journal article" date="2004" name="Genome Res.">
        <title>The status, quality, and expansion of the NIH full-length cDNA project: the Mammalian Gene Collection (MGC).</title>
        <authorList>
            <consortium name="The MGC Project Team"/>
        </authorList>
    </citation>
    <scope>NUCLEOTIDE SEQUENCE [LARGE SCALE MRNA]</scope>
    <source>
        <strain>FVB/N</strain>
        <tissue>Mammary gland</tissue>
    </source>
</reference>
<reference key="3">
    <citation type="journal article" date="1992" name="Gene">
        <title>The complexity of the Rab and Rho GTP-binding protein subfamilies revealed by a PCR cloning approach.</title>
        <authorList>
            <person name="Chavrier P."/>
            <person name="Simons K."/>
            <person name="Zerial M."/>
        </authorList>
    </citation>
    <scope>NUCLEOTIDE SEQUENCE [MRNA] OF 21-69</scope>
    <source>
        <tissue>Kidney</tissue>
    </source>
</reference>
<reference key="4">
    <citation type="journal article" date="1994" name="Development">
        <title>Open brain, a new mouse mutant with severe neural tube defects, shows altered gene expression patterns in the developing spinal cord.</title>
        <authorList>
            <person name="Gunther T."/>
            <person name="Struwe M."/>
            <person name="Aguzzi A."/>
            <person name="Schughart K."/>
        </authorList>
    </citation>
    <scope>ROLE IN DISEASE</scope>
</reference>
<reference key="5">
    <citation type="journal article" date="2000" name="Dev. Biol.">
        <title>Dorsal and lateral fates in the mouse neural tube require the cell-autonomous activity of the open brain gene.</title>
        <authorList>
            <person name="Eggenschwiler J.T."/>
            <person name="Anderson K.V."/>
        </authorList>
    </citation>
    <scope>DISRUPTION PHENOTYPE</scope>
    <scope>FUNCTION</scope>
</reference>
<reference key="6">
    <citation type="journal article" date="2001" name="Nature">
        <title>Rab23 is an essential negative regulator of the mouse Sonic hedgehog signalling pathway.</title>
        <authorList>
            <person name="Eggenschwiler J.T."/>
            <person name="Espinoza E."/>
            <person name="Anderson K.V."/>
        </authorList>
    </citation>
    <scope>DISRUPTION PHENOTYPE</scope>
    <scope>FUNCTION</scope>
</reference>
<reference key="7">
    <citation type="journal article" date="2003" name="Traffic">
        <title>Rab23, a negative regulator of hedgehog signaling, localizes to the plasma membrane and the endocytic pathway.</title>
        <authorList>
            <person name="Evans T.M."/>
            <person name="Ferguson C."/>
            <person name="Wainwright B.J."/>
            <person name="Parton R.G."/>
            <person name="Wicking C."/>
        </authorList>
    </citation>
    <scope>SUBCELLULAR LOCATION</scope>
    <scope>TISSUE SPECIFICITY</scope>
</reference>
<reference key="8">
    <citation type="journal article" date="2006" name="Dev. Biol.">
        <title>Mouse Rab23 regulates hedgehog signaling from smoothened to Gli proteins.</title>
        <authorList>
            <person name="Eggenschwiler J.T."/>
            <person name="Bulgakov O.V."/>
            <person name="Qin J."/>
            <person name="Li T."/>
            <person name="Anderson K.V."/>
        </authorList>
    </citation>
    <scope>FUNCTION</scope>
</reference>
<reference key="9">
    <citation type="journal article" date="2006" name="J. Neurosci. Res.">
        <title>Open brain gene product Rab23: expression pattern in the adult mouse brain and functional characterization.</title>
        <authorList>
            <person name="Guo A."/>
            <person name="Wang T."/>
            <person name="Ng E.L."/>
            <person name="Aulia S."/>
            <person name="Chong K.H."/>
            <person name="Teng F.Y."/>
            <person name="Wang Y."/>
            <person name="Tang B.L."/>
        </authorList>
    </citation>
    <scope>SUBCELLULAR LOCATION</scope>
    <scope>TISSUE SPECIFICITY</scope>
</reference>
<reference key="10">
    <citation type="journal article" date="2008" name="J. Biol. Chem.">
        <title>Rab23 regulates differentiation of ATDC5 chondroprogenitor cells.</title>
        <authorList>
            <person name="Yang L."/>
            <person name="Clinton J.M."/>
            <person name="Blackburn M.L."/>
            <person name="Zhang Q."/>
            <person name="Zou J."/>
            <person name="Zielinska-Kwiatkowska A."/>
            <person name="Tang B.L."/>
            <person name="Chansky H.A."/>
        </authorList>
    </citation>
    <scope>FUNCTION</scope>
</reference>
<reference key="11">
    <citation type="journal article" date="2010" name="Cell">
        <title>A tissue-specific atlas of mouse protein phosphorylation and expression.</title>
        <authorList>
            <person name="Huttlin E.L."/>
            <person name="Jedrychowski M.P."/>
            <person name="Elias J.E."/>
            <person name="Goswami T."/>
            <person name="Rad R."/>
            <person name="Beausoleil S.A."/>
            <person name="Villen J."/>
            <person name="Haas W."/>
            <person name="Sowa M.E."/>
            <person name="Gygi S.P."/>
        </authorList>
    </citation>
    <scope>IDENTIFICATION BY MASS SPECTROMETRY [LARGE SCALE ANALYSIS]</scope>
    <source>
        <tissue>Brain</tissue>
        <tissue>Heart</tissue>
        <tissue>Kidney</tissue>
        <tissue>Lung</tissue>
        <tissue>Testis</tissue>
    </source>
</reference>
<reference evidence="16 17" key="12">
    <citation type="journal article" date="2005" name="Nature">
        <title>Structural basis of family-wide Rab GTPase recognition by rabenosyn-5.</title>
        <authorList>
            <person name="Eathiraj S."/>
            <person name="Pan X."/>
            <person name="Ritacco C."/>
            <person name="Lambright D.G."/>
        </authorList>
    </citation>
    <scope>X-RAY CRYSTALLOGRAPHY (1.9 ANGSTROMS) OF 7-172 IN COMPLEX WITH GDP AND MG(2+)</scope>
    <scope>COFACTOR</scope>
</reference>
<accession>P35288</accession>
<keyword id="KW-0002">3D-structure</keyword>
<keyword id="KW-1003">Cell membrane</keyword>
<keyword id="KW-0963">Cytoplasm</keyword>
<keyword id="KW-0968">Cytoplasmic vesicle</keyword>
<keyword id="KW-0217">Developmental protein</keyword>
<keyword id="KW-0967">Endosome</keyword>
<keyword id="KW-0342">GTP-binding</keyword>
<keyword id="KW-0378">Hydrolase</keyword>
<keyword id="KW-0449">Lipoprotein</keyword>
<keyword id="KW-0460">Magnesium</keyword>
<keyword id="KW-0472">Membrane</keyword>
<keyword id="KW-0479">Metal-binding</keyword>
<keyword id="KW-0488">Methylation</keyword>
<keyword id="KW-0547">Nucleotide-binding</keyword>
<keyword id="KW-0597">Phosphoprotein</keyword>
<keyword id="KW-0636">Prenylation</keyword>
<keyword id="KW-0653">Protein transport</keyword>
<keyword id="KW-1185">Reference proteome</keyword>
<keyword id="KW-0813">Transport</keyword>